<keyword id="KW-1185">Reference proteome</keyword>
<protein>
    <recommendedName>
        <fullName>Uncharacterized protein B0228.9</fullName>
    </recommendedName>
</protein>
<proteinExistence type="predicted"/>
<name>YP79_CAEEL</name>
<reference key="1">
    <citation type="journal article" date="1998" name="Science">
        <title>Genome sequence of the nematode C. elegans: a platform for investigating biology.</title>
        <authorList>
            <consortium name="The C. elegans sequencing consortium"/>
        </authorList>
    </citation>
    <scope>NUCLEOTIDE SEQUENCE [LARGE SCALE GENOMIC DNA]</scope>
    <source>
        <strain>Bristol N2</strain>
    </source>
</reference>
<dbReference type="EMBL" id="FO080130">
    <property type="protein sequence ID" value="CCD61453.1"/>
    <property type="molecule type" value="Genomic_DNA"/>
</dbReference>
<dbReference type="PIR" id="T29049">
    <property type="entry name" value="T29049"/>
</dbReference>
<dbReference type="RefSeq" id="NP_495631.2">
    <property type="nucleotide sequence ID" value="NM_063230.2"/>
</dbReference>
<dbReference type="BioGRID" id="46732">
    <property type="interactions" value="3"/>
</dbReference>
<dbReference type="FunCoup" id="Q09439">
    <property type="interactions" value="308"/>
</dbReference>
<dbReference type="PaxDb" id="6239-B0228.9"/>
<dbReference type="EnsemblMetazoa" id="B0228.9.1">
    <property type="protein sequence ID" value="B0228.9.1"/>
    <property type="gene ID" value="WBGene00015066"/>
</dbReference>
<dbReference type="GeneID" id="181865"/>
<dbReference type="KEGG" id="cel:CELE_B0228.9"/>
<dbReference type="UCSC" id="B0228.9">
    <property type="organism name" value="c. elegans"/>
</dbReference>
<dbReference type="AGR" id="WB:WBGene00015066"/>
<dbReference type="CTD" id="181865"/>
<dbReference type="WormBase" id="B0228.9">
    <property type="protein sequence ID" value="CE39886"/>
    <property type="gene ID" value="WBGene00015066"/>
</dbReference>
<dbReference type="eggNOG" id="ENOG502RA3A">
    <property type="taxonomic scope" value="Eukaryota"/>
</dbReference>
<dbReference type="GeneTree" id="ENSGT00970000197679"/>
<dbReference type="HOGENOM" id="CLU_576522_0_0_1"/>
<dbReference type="InParanoid" id="Q09439"/>
<dbReference type="OMA" id="IRICTCF"/>
<dbReference type="OrthoDB" id="5850378at2759"/>
<dbReference type="PRO" id="PR:Q09439"/>
<dbReference type="Proteomes" id="UP000001940">
    <property type="component" value="Chromosome II"/>
</dbReference>
<dbReference type="Bgee" id="WBGene00015066">
    <property type="expression patterns" value="Expressed in pharyngeal muscle cell (C elegans)"/>
</dbReference>
<dbReference type="InterPro" id="IPR048314">
    <property type="entry name" value="DUF5382_C"/>
</dbReference>
<dbReference type="InterPro" id="IPR035415">
    <property type="entry name" value="DUF5382_central"/>
</dbReference>
<dbReference type="InterPro" id="IPR048313">
    <property type="entry name" value="DUF5382_N"/>
</dbReference>
<dbReference type="Pfam" id="PF17354">
    <property type="entry name" value="DUF5382"/>
    <property type="match status" value="1"/>
</dbReference>
<dbReference type="Pfam" id="PF20839">
    <property type="entry name" value="DUF5382_C"/>
    <property type="match status" value="1"/>
</dbReference>
<dbReference type="Pfam" id="PF20840">
    <property type="entry name" value="DUF5382_N"/>
    <property type="match status" value="1"/>
</dbReference>
<organism>
    <name type="scientific">Caenorhabditis elegans</name>
    <dbReference type="NCBI Taxonomy" id="6239"/>
    <lineage>
        <taxon>Eukaryota</taxon>
        <taxon>Metazoa</taxon>
        <taxon>Ecdysozoa</taxon>
        <taxon>Nematoda</taxon>
        <taxon>Chromadorea</taxon>
        <taxon>Rhabditida</taxon>
        <taxon>Rhabditina</taxon>
        <taxon>Rhabditomorpha</taxon>
        <taxon>Rhabditoidea</taxon>
        <taxon>Rhabditidae</taxon>
        <taxon>Peloderinae</taxon>
        <taxon>Caenorhabditis</taxon>
    </lineage>
</organism>
<feature type="chain" id="PRO_0000065049" description="Uncharacterized protein B0228.9">
    <location>
        <begin position="1"/>
        <end position="443"/>
    </location>
</feature>
<feature type="region of interest" description="Disordered" evidence="1">
    <location>
        <begin position="1"/>
        <end position="21"/>
    </location>
</feature>
<feature type="compositionally biased region" description="Polar residues" evidence="1">
    <location>
        <begin position="10"/>
        <end position="20"/>
    </location>
</feature>
<accession>Q09439</accession>
<gene>
    <name type="ORF">B0228.9</name>
</gene>
<evidence type="ECO:0000256" key="1">
    <source>
        <dbReference type="SAM" id="MobiDB-lite"/>
    </source>
</evidence>
<sequence length="443" mass="52532">MQSVTPPPTQQGKPDPTNSDMMMKRFQEDMVGILDGRSRAHFDDLANYFHSKIRICTCFEPGRSLSVPEFQHVLTFISGYYQHLTEVRSDRWTDHPNYINGIFTYTAMGSDRKNSDGKWTYEASMDWNQNKFLIEYIWFPYNCSVFPVKDPSEPLEDVDNYLERVRTKLSSGLFLPDGVDQTLQNFEEFGDWITDDAIIVVCDEQKMDKNEFIKYMSTRYHHIRKYSNNQFDHVKNNQDFEITFSTTWTADNTTQFRDTYIFRVKKAEDYFPENDRLYLLWKIYWVTKRCTVDVTQYPAVLDGSVILGEVNKRFCGMIDGENWDVYQSFLDLFDPNDTKWGSCVGKREQKYDKIREYMNKVVARYAKCVVSEVRIRNLVHADFSTTFLLSRANEIQEQEELDVGFVGYKNKNGHWKINRMYFECEESKKRKFMDNLLNVRLKC</sequence>